<sequence>MSELTSLTIAEAREKLRAKEITAIELTEAYISAIDAANERLNAYVKVTPDLARVMARKSDERIAAGTAGELEGIPLGIKDLFATVGVHTQACSHILDGFEPRYESTVTQNLWDDGAVMLGKLNMDEFAMGSSNETSYYGPVINPWRAEGSNQQLVPGGSSGGSAAAVAAHLCAGATATDTGGSIRQPAAFTGTVGIKPTYGRCSRWGTVAFASSLDQAGPIARDVRDAAILLKSMASVDAKDTTSVDLPVPDYEAVLGQSLKGMKIGIPNEYRVDGMPEEIETLWRQGIAWLKDAGADIVDISLPHTKYALPAYYIVAPAEASSNLARYDGVRYGLRVDGKDIVDMYEKTRAAGFGKEVKRRIMIGTYVLSAGYYDAYYIRAQKVRTLIKRDFELAFDAGVDAILTPATPSSAFGVADENLAADPVKMYLNDIFTVTVNMAGLPGIAVPAGLDQKGLPLGLQLIGKAFDEETLFKTAYVIEQAAGKFTPAKWW</sequence>
<proteinExistence type="inferred from homology"/>
<evidence type="ECO:0000255" key="1">
    <source>
        <dbReference type="HAMAP-Rule" id="MF_00120"/>
    </source>
</evidence>
<protein>
    <recommendedName>
        <fullName evidence="1">Glutamyl-tRNA(Gln) amidotransferase subunit A</fullName>
        <shortName evidence="1">Glu-ADT subunit A</shortName>
        <ecNumber evidence="1">6.3.5.7</ecNumber>
    </recommendedName>
</protein>
<comment type="function">
    <text evidence="1">Allows the formation of correctly charged Gln-tRNA(Gln) through the transamidation of misacylated Glu-tRNA(Gln) in organisms which lack glutaminyl-tRNA synthetase. The reaction takes place in the presence of glutamine and ATP through an activated gamma-phospho-Glu-tRNA(Gln).</text>
</comment>
<comment type="catalytic activity">
    <reaction evidence="1">
        <text>L-glutamyl-tRNA(Gln) + L-glutamine + ATP + H2O = L-glutaminyl-tRNA(Gln) + L-glutamate + ADP + phosphate + H(+)</text>
        <dbReference type="Rhea" id="RHEA:17521"/>
        <dbReference type="Rhea" id="RHEA-COMP:9681"/>
        <dbReference type="Rhea" id="RHEA-COMP:9684"/>
        <dbReference type="ChEBI" id="CHEBI:15377"/>
        <dbReference type="ChEBI" id="CHEBI:15378"/>
        <dbReference type="ChEBI" id="CHEBI:29985"/>
        <dbReference type="ChEBI" id="CHEBI:30616"/>
        <dbReference type="ChEBI" id="CHEBI:43474"/>
        <dbReference type="ChEBI" id="CHEBI:58359"/>
        <dbReference type="ChEBI" id="CHEBI:78520"/>
        <dbReference type="ChEBI" id="CHEBI:78521"/>
        <dbReference type="ChEBI" id="CHEBI:456216"/>
        <dbReference type="EC" id="6.3.5.7"/>
    </reaction>
</comment>
<comment type="subunit">
    <text evidence="1">Heterotrimer of A, B and C subunits.</text>
</comment>
<comment type="similarity">
    <text evidence="1">Belongs to the amidase family. GatA subfamily.</text>
</comment>
<organism>
    <name type="scientific">Rhizobium etli (strain ATCC 51251 / DSM 11541 / JCM 21823 / NBRC 15573 / CFN 42)</name>
    <dbReference type="NCBI Taxonomy" id="347834"/>
    <lineage>
        <taxon>Bacteria</taxon>
        <taxon>Pseudomonadati</taxon>
        <taxon>Pseudomonadota</taxon>
        <taxon>Alphaproteobacteria</taxon>
        <taxon>Hyphomicrobiales</taxon>
        <taxon>Rhizobiaceae</taxon>
        <taxon>Rhizobium/Agrobacterium group</taxon>
        <taxon>Rhizobium</taxon>
    </lineage>
</organism>
<feature type="chain" id="PRO_0000241141" description="Glutamyl-tRNA(Gln) amidotransferase subunit A">
    <location>
        <begin position="1"/>
        <end position="493"/>
    </location>
</feature>
<feature type="active site" description="Charge relay system" evidence="1">
    <location>
        <position position="79"/>
    </location>
</feature>
<feature type="active site" description="Charge relay system" evidence="1">
    <location>
        <position position="159"/>
    </location>
</feature>
<feature type="active site" description="Acyl-ester intermediate" evidence="1">
    <location>
        <position position="183"/>
    </location>
</feature>
<reference key="1">
    <citation type="journal article" date="2006" name="Proc. Natl. Acad. Sci. U.S.A.">
        <title>The partitioned Rhizobium etli genome: genetic and metabolic redundancy in seven interacting replicons.</title>
        <authorList>
            <person name="Gonzalez V."/>
            <person name="Santamaria R.I."/>
            <person name="Bustos P."/>
            <person name="Hernandez-Gonzalez I."/>
            <person name="Medrano-Soto A."/>
            <person name="Moreno-Hagelsieb G."/>
            <person name="Janga S.C."/>
            <person name="Ramirez M.A."/>
            <person name="Jimenez-Jacinto V."/>
            <person name="Collado-Vides J."/>
            <person name="Davila G."/>
        </authorList>
    </citation>
    <scope>NUCLEOTIDE SEQUENCE [LARGE SCALE GENOMIC DNA]</scope>
    <source>
        <strain>ATCC 51251 / DSM 11541 / JCM 21823 / NBRC 15573 / CFN 42</strain>
    </source>
</reference>
<keyword id="KW-0067">ATP-binding</keyword>
<keyword id="KW-0436">Ligase</keyword>
<keyword id="KW-0547">Nucleotide-binding</keyword>
<keyword id="KW-0648">Protein biosynthesis</keyword>
<keyword id="KW-1185">Reference proteome</keyword>
<dbReference type="EC" id="6.3.5.7" evidence="1"/>
<dbReference type="EMBL" id="CP000133">
    <property type="protein sequence ID" value="ABC90647.1"/>
    <property type="molecule type" value="Genomic_DNA"/>
</dbReference>
<dbReference type="RefSeq" id="WP_011425143.1">
    <property type="nucleotide sequence ID" value="NC_007761.1"/>
</dbReference>
<dbReference type="SMR" id="Q2K939"/>
<dbReference type="KEGG" id="ret:RHE_CH01855"/>
<dbReference type="eggNOG" id="COG0154">
    <property type="taxonomic scope" value="Bacteria"/>
</dbReference>
<dbReference type="HOGENOM" id="CLU_009600_0_3_5"/>
<dbReference type="OrthoDB" id="9811471at2"/>
<dbReference type="Proteomes" id="UP000001936">
    <property type="component" value="Chromosome"/>
</dbReference>
<dbReference type="GO" id="GO:0030956">
    <property type="term" value="C:glutamyl-tRNA(Gln) amidotransferase complex"/>
    <property type="evidence" value="ECO:0007669"/>
    <property type="project" value="InterPro"/>
</dbReference>
<dbReference type="GO" id="GO:0005524">
    <property type="term" value="F:ATP binding"/>
    <property type="evidence" value="ECO:0007669"/>
    <property type="project" value="UniProtKB-KW"/>
</dbReference>
<dbReference type="GO" id="GO:0050567">
    <property type="term" value="F:glutaminyl-tRNA synthase (glutamine-hydrolyzing) activity"/>
    <property type="evidence" value="ECO:0007669"/>
    <property type="project" value="UniProtKB-UniRule"/>
</dbReference>
<dbReference type="GO" id="GO:0006412">
    <property type="term" value="P:translation"/>
    <property type="evidence" value="ECO:0007669"/>
    <property type="project" value="UniProtKB-UniRule"/>
</dbReference>
<dbReference type="Gene3D" id="3.90.1300.10">
    <property type="entry name" value="Amidase signature (AS) domain"/>
    <property type="match status" value="1"/>
</dbReference>
<dbReference type="HAMAP" id="MF_00120">
    <property type="entry name" value="GatA"/>
    <property type="match status" value="1"/>
</dbReference>
<dbReference type="InterPro" id="IPR000120">
    <property type="entry name" value="Amidase"/>
</dbReference>
<dbReference type="InterPro" id="IPR020556">
    <property type="entry name" value="Amidase_CS"/>
</dbReference>
<dbReference type="InterPro" id="IPR023631">
    <property type="entry name" value="Amidase_dom"/>
</dbReference>
<dbReference type="InterPro" id="IPR036928">
    <property type="entry name" value="AS_sf"/>
</dbReference>
<dbReference type="InterPro" id="IPR004412">
    <property type="entry name" value="GatA"/>
</dbReference>
<dbReference type="NCBIfam" id="TIGR00132">
    <property type="entry name" value="gatA"/>
    <property type="match status" value="1"/>
</dbReference>
<dbReference type="PANTHER" id="PTHR11895:SF151">
    <property type="entry name" value="GLUTAMYL-TRNA(GLN) AMIDOTRANSFERASE SUBUNIT A"/>
    <property type="match status" value="1"/>
</dbReference>
<dbReference type="PANTHER" id="PTHR11895">
    <property type="entry name" value="TRANSAMIDASE"/>
    <property type="match status" value="1"/>
</dbReference>
<dbReference type="Pfam" id="PF01425">
    <property type="entry name" value="Amidase"/>
    <property type="match status" value="1"/>
</dbReference>
<dbReference type="SUPFAM" id="SSF75304">
    <property type="entry name" value="Amidase signature (AS) enzymes"/>
    <property type="match status" value="1"/>
</dbReference>
<dbReference type="PROSITE" id="PS00571">
    <property type="entry name" value="AMIDASES"/>
    <property type="match status" value="1"/>
</dbReference>
<name>GATA_RHIEC</name>
<gene>
    <name evidence="1" type="primary">gatA</name>
    <name type="ordered locus">RHE_CH01855</name>
</gene>
<accession>Q2K939</accession>